<protein>
    <recommendedName>
        <fullName evidence="1">Large ribosomal subunit protein uL22</fullName>
    </recommendedName>
    <alternativeName>
        <fullName evidence="2">50S ribosomal protein L22</fullName>
    </alternativeName>
</protein>
<evidence type="ECO:0000255" key="1">
    <source>
        <dbReference type="HAMAP-Rule" id="MF_01331"/>
    </source>
</evidence>
<evidence type="ECO:0000305" key="2"/>
<comment type="function">
    <text evidence="1">This protein binds specifically to 23S rRNA; its binding is stimulated by other ribosomal proteins, e.g. L4, L17, and L20. It is important during the early stages of 50S assembly. It makes multiple contacts with different domains of the 23S rRNA in the assembled 50S subunit and ribosome (By similarity).</text>
</comment>
<comment type="function">
    <text evidence="1">The globular domain of the protein is located near the polypeptide exit tunnel on the outside of the subunit, while an extended beta-hairpin is found that lines the wall of the exit tunnel in the center of the 70S ribosome.</text>
</comment>
<comment type="subunit">
    <text evidence="1">Part of the 50S ribosomal subunit.</text>
</comment>
<comment type="similarity">
    <text evidence="1">Belongs to the universal ribosomal protein uL22 family.</text>
</comment>
<name>RL22_SHIB3</name>
<accession>B2U2T3</accession>
<keyword id="KW-1185">Reference proteome</keyword>
<keyword id="KW-0687">Ribonucleoprotein</keyword>
<keyword id="KW-0689">Ribosomal protein</keyword>
<keyword id="KW-0694">RNA-binding</keyword>
<keyword id="KW-0699">rRNA-binding</keyword>
<dbReference type="EMBL" id="CP001063">
    <property type="protein sequence ID" value="ACD09733.1"/>
    <property type="molecule type" value="Genomic_DNA"/>
</dbReference>
<dbReference type="RefSeq" id="WP_000447529.1">
    <property type="nucleotide sequence ID" value="NC_010658.1"/>
</dbReference>
<dbReference type="SMR" id="B2U2T3"/>
<dbReference type="STRING" id="344609.SbBS512_E3700"/>
<dbReference type="GeneID" id="93778672"/>
<dbReference type="KEGG" id="sbc:SbBS512_E3700"/>
<dbReference type="HOGENOM" id="CLU_083987_3_3_6"/>
<dbReference type="Proteomes" id="UP000001030">
    <property type="component" value="Chromosome"/>
</dbReference>
<dbReference type="GO" id="GO:0022625">
    <property type="term" value="C:cytosolic large ribosomal subunit"/>
    <property type="evidence" value="ECO:0007669"/>
    <property type="project" value="TreeGrafter"/>
</dbReference>
<dbReference type="GO" id="GO:0019843">
    <property type="term" value="F:rRNA binding"/>
    <property type="evidence" value="ECO:0007669"/>
    <property type="project" value="UniProtKB-UniRule"/>
</dbReference>
<dbReference type="GO" id="GO:0003735">
    <property type="term" value="F:structural constituent of ribosome"/>
    <property type="evidence" value="ECO:0007669"/>
    <property type="project" value="InterPro"/>
</dbReference>
<dbReference type="GO" id="GO:0006412">
    <property type="term" value="P:translation"/>
    <property type="evidence" value="ECO:0007669"/>
    <property type="project" value="UniProtKB-UniRule"/>
</dbReference>
<dbReference type="CDD" id="cd00336">
    <property type="entry name" value="Ribosomal_L22"/>
    <property type="match status" value="1"/>
</dbReference>
<dbReference type="FunFam" id="3.90.470.10:FF:000001">
    <property type="entry name" value="50S ribosomal protein L22"/>
    <property type="match status" value="1"/>
</dbReference>
<dbReference type="Gene3D" id="3.90.470.10">
    <property type="entry name" value="Ribosomal protein L22/L17"/>
    <property type="match status" value="1"/>
</dbReference>
<dbReference type="HAMAP" id="MF_01331_B">
    <property type="entry name" value="Ribosomal_uL22_B"/>
    <property type="match status" value="1"/>
</dbReference>
<dbReference type="InterPro" id="IPR001063">
    <property type="entry name" value="Ribosomal_uL22"/>
</dbReference>
<dbReference type="InterPro" id="IPR005727">
    <property type="entry name" value="Ribosomal_uL22_bac/chlpt-type"/>
</dbReference>
<dbReference type="InterPro" id="IPR047867">
    <property type="entry name" value="Ribosomal_uL22_bac/org-type"/>
</dbReference>
<dbReference type="InterPro" id="IPR018260">
    <property type="entry name" value="Ribosomal_uL22_CS"/>
</dbReference>
<dbReference type="InterPro" id="IPR036394">
    <property type="entry name" value="Ribosomal_uL22_sf"/>
</dbReference>
<dbReference type="NCBIfam" id="TIGR01044">
    <property type="entry name" value="rplV_bact"/>
    <property type="match status" value="1"/>
</dbReference>
<dbReference type="PANTHER" id="PTHR13501">
    <property type="entry name" value="CHLOROPLAST 50S RIBOSOMAL PROTEIN L22-RELATED"/>
    <property type="match status" value="1"/>
</dbReference>
<dbReference type="PANTHER" id="PTHR13501:SF8">
    <property type="entry name" value="LARGE RIBOSOMAL SUBUNIT PROTEIN UL22M"/>
    <property type="match status" value="1"/>
</dbReference>
<dbReference type="Pfam" id="PF00237">
    <property type="entry name" value="Ribosomal_L22"/>
    <property type="match status" value="1"/>
</dbReference>
<dbReference type="SUPFAM" id="SSF54843">
    <property type="entry name" value="Ribosomal protein L22"/>
    <property type="match status" value="1"/>
</dbReference>
<dbReference type="PROSITE" id="PS00464">
    <property type="entry name" value="RIBOSOMAL_L22"/>
    <property type="match status" value="1"/>
</dbReference>
<sequence>METIAKHRHARSSAQKVRLVADLIRGKKVSQALDILTYTNKKAAVLVKKVLESAIANAEHNDGADIDDLKVTKIFVDEGPSMKRIMPRAKGRADRILKRTSHITVVVSDR</sequence>
<proteinExistence type="inferred from homology"/>
<reference key="1">
    <citation type="submission" date="2008-05" db="EMBL/GenBank/DDBJ databases">
        <title>Complete sequence of Shigella boydii serotype 18 strain BS512.</title>
        <authorList>
            <person name="Rasko D.A."/>
            <person name="Rosovitz M."/>
            <person name="Maurelli A.T."/>
            <person name="Myers G."/>
            <person name="Seshadri R."/>
            <person name="Cer R."/>
            <person name="Jiang L."/>
            <person name="Ravel J."/>
            <person name="Sebastian Y."/>
        </authorList>
    </citation>
    <scope>NUCLEOTIDE SEQUENCE [LARGE SCALE GENOMIC DNA]</scope>
    <source>
        <strain>CDC 3083-94 / BS512</strain>
    </source>
</reference>
<organism>
    <name type="scientific">Shigella boydii serotype 18 (strain CDC 3083-94 / BS512)</name>
    <dbReference type="NCBI Taxonomy" id="344609"/>
    <lineage>
        <taxon>Bacteria</taxon>
        <taxon>Pseudomonadati</taxon>
        <taxon>Pseudomonadota</taxon>
        <taxon>Gammaproteobacteria</taxon>
        <taxon>Enterobacterales</taxon>
        <taxon>Enterobacteriaceae</taxon>
        <taxon>Shigella</taxon>
    </lineage>
</organism>
<feature type="chain" id="PRO_1000142311" description="Large ribosomal subunit protein uL22">
    <location>
        <begin position="1"/>
        <end position="110"/>
    </location>
</feature>
<gene>
    <name evidence="1" type="primary">rplV</name>
    <name type="ordered locus">SbBS512_E3700</name>
</gene>